<evidence type="ECO:0000255" key="1">
    <source>
        <dbReference type="HAMAP-Rule" id="MF_00568"/>
    </source>
</evidence>
<sequence length="304" mass="33545">MNNGIKEQIRELLKQHNAVLLAHNYMRDEVQEIADITGDSLALSIEAAKTEADVIVFCGVHFMAESAAILSPDKKVLLPRLDAGCPMADMVDARGLEELKKKHPGVPVVTYVNSTAEVKAHSDICCTSANATRVVKSLPDKKVIFAPDRNLGSFVAKSVPDKEFIFWDGYCPTHERMTVEAVLAKKTEYPEALFICHPECAPAVTALADQACSTSAMYDYCRDSKARQFIIGTEAGILYRLRLENPDKEFILASPALFCPNMKLTSQEDVLHSLKTLTPVVSVPEDIRLKAKLALDRMLAVPRD</sequence>
<keyword id="KW-0004">4Fe-4S</keyword>
<keyword id="KW-0963">Cytoplasm</keyword>
<keyword id="KW-0408">Iron</keyword>
<keyword id="KW-0411">Iron-sulfur</keyword>
<keyword id="KW-0479">Metal-binding</keyword>
<keyword id="KW-0662">Pyridine nucleotide biosynthesis</keyword>
<keyword id="KW-1185">Reference proteome</keyword>
<keyword id="KW-0808">Transferase</keyword>
<protein>
    <recommendedName>
        <fullName evidence="1">Quinolinate synthase</fullName>
        <ecNumber evidence="1">2.5.1.72</ecNumber>
    </recommendedName>
</protein>
<reference key="1">
    <citation type="submission" date="2006-10" db="EMBL/GenBank/DDBJ databases">
        <title>Complete sequence of chromosome of Pelobacter propionicus DSM 2379.</title>
        <authorList>
            <consortium name="US DOE Joint Genome Institute"/>
            <person name="Copeland A."/>
            <person name="Lucas S."/>
            <person name="Lapidus A."/>
            <person name="Barry K."/>
            <person name="Detter J.C."/>
            <person name="Glavina del Rio T."/>
            <person name="Hammon N."/>
            <person name="Israni S."/>
            <person name="Dalin E."/>
            <person name="Tice H."/>
            <person name="Pitluck S."/>
            <person name="Saunders E."/>
            <person name="Brettin T."/>
            <person name="Bruce D."/>
            <person name="Han C."/>
            <person name="Tapia R."/>
            <person name="Schmutz J."/>
            <person name="Larimer F."/>
            <person name="Land M."/>
            <person name="Hauser L."/>
            <person name="Kyrpides N."/>
            <person name="Kim E."/>
            <person name="Lovley D."/>
            <person name="Richardson P."/>
        </authorList>
    </citation>
    <scope>NUCLEOTIDE SEQUENCE [LARGE SCALE GENOMIC DNA]</scope>
    <source>
        <strain>DSM 2379 / NBRC 103807 / OttBd1</strain>
    </source>
</reference>
<organism>
    <name type="scientific">Pelobacter propionicus (strain DSM 2379 / NBRC 103807 / OttBd1)</name>
    <dbReference type="NCBI Taxonomy" id="338966"/>
    <lineage>
        <taxon>Bacteria</taxon>
        <taxon>Pseudomonadati</taxon>
        <taxon>Thermodesulfobacteriota</taxon>
        <taxon>Desulfuromonadia</taxon>
        <taxon>Desulfuromonadales</taxon>
        <taxon>Desulfuromonadaceae</taxon>
        <taxon>Pelobacter</taxon>
    </lineage>
</organism>
<dbReference type="EC" id="2.5.1.72" evidence="1"/>
<dbReference type="EMBL" id="CP000482">
    <property type="protein sequence ID" value="ABL01165.1"/>
    <property type="molecule type" value="Genomic_DNA"/>
</dbReference>
<dbReference type="RefSeq" id="WP_011737378.1">
    <property type="nucleotide sequence ID" value="NC_008609.1"/>
</dbReference>
<dbReference type="SMR" id="A1AUZ4"/>
<dbReference type="STRING" id="338966.Ppro_3573"/>
<dbReference type="KEGG" id="ppd:Ppro_3573"/>
<dbReference type="eggNOG" id="COG0379">
    <property type="taxonomic scope" value="Bacteria"/>
</dbReference>
<dbReference type="HOGENOM" id="CLU_047382_0_0_7"/>
<dbReference type="OrthoDB" id="9801204at2"/>
<dbReference type="UniPathway" id="UPA00253">
    <property type="reaction ID" value="UER00327"/>
</dbReference>
<dbReference type="Proteomes" id="UP000006732">
    <property type="component" value="Chromosome"/>
</dbReference>
<dbReference type="GO" id="GO:0005829">
    <property type="term" value="C:cytosol"/>
    <property type="evidence" value="ECO:0007669"/>
    <property type="project" value="TreeGrafter"/>
</dbReference>
<dbReference type="GO" id="GO:0051539">
    <property type="term" value="F:4 iron, 4 sulfur cluster binding"/>
    <property type="evidence" value="ECO:0007669"/>
    <property type="project" value="UniProtKB-KW"/>
</dbReference>
<dbReference type="GO" id="GO:0046872">
    <property type="term" value="F:metal ion binding"/>
    <property type="evidence" value="ECO:0007669"/>
    <property type="project" value="UniProtKB-KW"/>
</dbReference>
<dbReference type="GO" id="GO:0008987">
    <property type="term" value="F:quinolinate synthetase A activity"/>
    <property type="evidence" value="ECO:0007669"/>
    <property type="project" value="UniProtKB-UniRule"/>
</dbReference>
<dbReference type="GO" id="GO:0034628">
    <property type="term" value="P:'de novo' NAD biosynthetic process from L-aspartate"/>
    <property type="evidence" value="ECO:0007669"/>
    <property type="project" value="TreeGrafter"/>
</dbReference>
<dbReference type="FunFam" id="3.40.50.10800:FF:000003">
    <property type="entry name" value="Quinolinate synthase A"/>
    <property type="match status" value="1"/>
</dbReference>
<dbReference type="Gene3D" id="3.40.50.10800">
    <property type="entry name" value="NadA-like"/>
    <property type="match status" value="3"/>
</dbReference>
<dbReference type="HAMAP" id="MF_00568">
    <property type="entry name" value="NadA_type2"/>
    <property type="match status" value="1"/>
</dbReference>
<dbReference type="InterPro" id="IPR003473">
    <property type="entry name" value="NadA"/>
</dbReference>
<dbReference type="InterPro" id="IPR036094">
    <property type="entry name" value="NadA_sf"/>
</dbReference>
<dbReference type="InterPro" id="IPR023066">
    <property type="entry name" value="Quinolinate_synth_type2"/>
</dbReference>
<dbReference type="NCBIfam" id="TIGR00550">
    <property type="entry name" value="nadA"/>
    <property type="match status" value="1"/>
</dbReference>
<dbReference type="NCBIfam" id="NF006878">
    <property type="entry name" value="PRK09375.1-2"/>
    <property type="match status" value="1"/>
</dbReference>
<dbReference type="PANTHER" id="PTHR30573:SF0">
    <property type="entry name" value="QUINOLINATE SYNTHASE, CHLOROPLASTIC"/>
    <property type="match status" value="1"/>
</dbReference>
<dbReference type="PANTHER" id="PTHR30573">
    <property type="entry name" value="QUINOLINATE SYNTHETASE A"/>
    <property type="match status" value="1"/>
</dbReference>
<dbReference type="Pfam" id="PF02445">
    <property type="entry name" value="NadA"/>
    <property type="match status" value="1"/>
</dbReference>
<dbReference type="SUPFAM" id="SSF142754">
    <property type="entry name" value="NadA-like"/>
    <property type="match status" value="1"/>
</dbReference>
<proteinExistence type="inferred from homology"/>
<accession>A1AUZ4</accession>
<comment type="function">
    <text evidence="1">Catalyzes the condensation of iminoaspartate with dihydroxyacetone phosphate to form quinolinate.</text>
</comment>
<comment type="catalytic activity">
    <reaction evidence="1">
        <text>iminosuccinate + dihydroxyacetone phosphate = quinolinate + phosphate + 2 H2O + H(+)</text>
        <dbReference type="Rhea" id="RHEA:25888"/>
        <dbReference type="ChEBI" id="CHEBI:15377"/>
        <dbReference type="ChEBI" id="CHEBI:15378"/>
        <dbReference type="ChEBI" id="CHEBI:29959"/>
        <dbReference type="ChEBI" id="CHEBI:43474"/>
        <dbReference type="ChEBI" id="CHEBI:57642"/>
        <dbReference type="ChEBI" id="CHEBI:77875"/>
        <dbReference type="EC" id="2.5.1.72"/>
    </reaction>
    <physiologicalReaction direction="left-to-right" evidence="1">
        <dbReference type="Rhea" id="RHEA:25889"/>
    </physiologicalReaction>
</comment>
<comment type="cofactor">
    <cofactor evidence="1">
        <name>[4Fe-4S] cluster</name>
        <dbReference type="ChEBI" id="CHEBI:49883"/>
    </cofactor>
    <text evidence="1">Binds 1 [4Fe-4S] cluster per subunit.</text>
</comment>
<comment type="pathway">
    <text evidence="1">Cofactor biosynthesis; NAD(+) biosynthesis; quinolinate from iminoaspartate: step 1/1.</text>
</comment>
<comment type="subcellular location">
    <subcellularLocation>
        <location evidence="1">Cytoplasm</location>
    </subcellularLocation>
</comment>
<comment type="similarity">
    <text evidence="1">Belongs to the quinolinate synthase family. Type 2 subfamily.</text>
</comment>
<name>NADA_PELPD</name>
<feature type="chain" id="PRO_1000061162" description="Quinolinate synthase">
    <location>
        <begin position="1"/>
        <end position="304"/>
    </location>
</feature>
<feature type="binding site" evidence="1">
    <location>
        <position position="23"/>
    </location>
    <ligand>
        <name>iminosuccinate</name>
        <dbReference type="ChEBI" id="CHEBI:77875"/>
    </ligand>
</feature>
<feature type="binding site" evidence="1">
    <location>
        <position position="40"/>
    </location>
    <ligand>
        <name>iminosuccinate</name>
        <dbReference type="ChEBI" id="CHEBI:77875"/>
    </ligand>
</feature>
<feature type="binding site" evidence="1">
    <location>
        <position position="85"/>
    </location>
    <ligand>
        <name>[4Fe-4S] cluster</name>
        <dbReference type="ChEBI" id="CHEBI:49883"/>
    </ligand>
</feature>
<feature type="binding site" evidence="1">
    <location>
        <begin position="111"/>
        <end position="113"/>
    </location>
    <ligand>
        <name>iminosuccinate</name>
        <dbReference type="ChEBI" id="CHEBI:77875"/>
    </ligand>
</feature>
<feature type="binding site" evidence="1">
    <location>
        <position position="128"/>
    </location>
    <ligand>
        <name>iminosuccinate</name>
        <dbReference type="ChEBI" id="CHEBI:77875"/>
    </ligand>
</feature>
<feature type="binding site" evidence="1">
    <location>
        <position position="171"/>
    </location>
    <ligand>
        <name>[4Fe-4S] cluster</name>
        <dbReference type="ChEBI" id="CHEBI:49883"/>
    </ligand>
</feature>
<feature type="binding site" evidence="1">
    <location>
        <begin position="197"/>
        <end position="199"/>
    </location>
    <ligand>
        <name>iminosuccinate</name>
        <dbReference type="ChEBI" id="CHEBI:77875"/>
    </ligand>
</feature>
<feature type="binding site" evidence="1">
    <location>
        <position position="214"/>
    </location>
    <ligand>
        <name>iminosuccinate</name>
        <dbReference type="ChEBI" id="CHEBI:77875"/>
    </ligand>
</feature>
<feature type="binding site" evidence="1">
    <location>
        <position position="259"/>
    </location>
    <ligand>
        <name>[4Fe-4S] cluster</name>
        <dbReference type="ChEBI" id="CHEBI:49883"/>
    </ligand>
</feature>
<gene>
    <name evidence="1" type="primary">nadA</name>
    <name type="ordered locus">Ppro_3573</name>
</gene>